<organism>
    <name type="scientific">Granulibacter bethesdensis (strain ATCC BAA-1260 / CGDNIH1)</name>
    <dbReference type="NCBI Taxonomy" id="391165"/>
    <lineage>
        <taxon>Bacteria</taxon>
        <taxon>Pseudomonadati</taxon>
        <taxon>Pseudomonadota</taxon>
        <taxon>Alphaproteobacteria</taxon>
        <taxon>Acetobacterales</taxon>
        <taxon>Acetobacteraceae</taxon>
        <taxon>Granulibacter</taxon>
    </lineage>
</organism>
<reference key="1">
    <citation type="journal article" date="2007" name="J. Bacteriol.">
        <title>Genome sequence analysis of the emerging human pathogenic acetic acid bacterium Granulibacter bethesdensis.</title>
        <authorList>
            <person name="Greenberg D.E."/>
            <person name="Porcella S.F."/>
            <person name="Zelazny A.M."/>
            <person name="Virtaneva K."/>
            <person name="Sturdevant D.E."/>
            <person name="Kupko J.J. III"/>
            <person name="Barbian K.D."/>
            <person name="Babar A."/>
            <person name="Dorward D.W."/>
            <person name="Holland S.M."/>
        </authorList>
    </citation>
    <scope>NUCLEOTIDE SEQUENCE [LARGE SCALE GENOMIC DNA]</scope>
    <source>
        <strain>ATCC BAA-1260 / CGDNIH1</strain>
    </source>
</reference>
<gene>
    <name evidence="1" type="primary">dnaK</name>
    <name type="ordered locus">GbCGDNIH1_0022</name>
</gene>
<keyword id="KW-0067">ATP-binding</keyword>
<keyword id="KW-0143">Chaperone</keyword>
<keyword id="KW-0547">Nucleotide-binding</keyword>
<keyword id="KW-0597">Phosphoprotein</keyword>
<keyword id="KW-1185">Reference proteome</keyword>
<keyword id="KW-0346">Stress response</keyword>
<feature type="chain" id="PRO_1000059569" description="Chaperone protein DnaK">
    <location>
        <begin position="1"/>
        <end position="632"/>
    </location>
</feature>
<feature type="region of interest" description="Disordered" evidence="2">
    <location>
        <begin position="600"/>
        <end position="632"/>
    </location>
</feature>
<feature type="modified residue" description="Phosphothreonine; by autocatalysis" evidence="1">
    <location>
        <position position="198"/>
    </location>
</feature>
<evidence type="ECO:0000255" key="1">
    <source>
        <dbReference type="HAMAP-Rule" id="MF_00332"/>
    </source>
</evidence>
<evidence type="ECO:0000256" key="2">
    <source>
        <dbReference type="SAM" id="MobiDB-lite"/>
    </source>
</evidence>
<name>DNAK_GRABC</name>
<sequence length="632" mass="67860">MSKVIGIDLGTTNSCVAIMEGKDVRVLENAEGARTTPSMIAFTDSGERLVGQAAKRQAVTNPSNTLYAVKRLIGRRYDDPTVAKDKDLVPYAIVRGDNGDAWVEARGEKYAPSQISAFVLSKMKETAEAYLGEPVTQAVITVPAYFNDSQRQATKDAGRIAGLEVLRIINEPTAAALAYGMDKKNTGTIAVYDLGGGTFDVSILEIGDGVFEVKSTNGDTFLGGEDFDARVIDYLASEFQREQGIDLRKDKLALQRLKEAAEKAKIELSSSKETEINLPFITADASGPKHLVLKLSRAKLESLVDDLIQRTLEPCRKALKDAGVSAGEISDVILVGGMTRMPKVIEAVKQFFGKEPARNVNPDEVVAIGAAVQGAVLKGDVKDVLLLDVTPLSLGIETLGGVFTRLIDRNTTIPTKKSQVFSTAEDNQPAVTIKVYQGEREMAADNKSLGQFDLTGLPPAPRGVPQIEVTFDIDANGIVNVSAKDKATGKEQQIRIQASGGLSDADIQRMVQEAEANAEADKQRRALVEARNQAESLVHQVEKNLKEQGDKIAEADKGEAESAISATRTALEGDDLAALTQATERLSQVAMKIGEAMYKAQSEAPTGEAEAGPNGEKVVDADFEEVDPKKHS</sequence>
<protein>
    <recommendedName>
        <fullName evidence="1">Chaperone protein DnaK</fullName>
    </recommendedName>
    <alternativeName>
        <fullName evidence="1">HSP70</fullName>
    </alternativeName>
    <alternativeName>
        <fullName evidence="1">Heat shock 70 kDa protein</fullName>
    </alternativeName>
    <alternativeName>
        <fullName evidence="1">Heat shock protein 70</fullName>
    </alternativeName>
</protein>
<comment type="function">
    <text evidence="1">Acts as a chaperone.</text>
</comment>
<comment type="induction">
    <text evidence="1">By stress conditions e.g. heat shock.</text>
</comment>
<comment type="similarity">
    <text evidence="1">Belongs to the heat shock protein 70 family.</text>
</comment>
<proteinExistence type="inferred from homology"/>
<dbReference type="EMBL" id="CP000394">
    <property type="protein sequence ID" value="ABI60920.1"/>
    <property type="molecule type" value="Genomic_DNA"/>
</dbReference>
<dbReference type="RefSeq" id="WP_011630730.1">
    <property type="nucleotide sequence ID" value="NC_008343.2"/>
</dbReference>
<dbReference type="SMR" id="Q0BW82"/>
<dbReference type="STRING" id="391165.GbCGDNIH1_0022"/>
<dbReference type="GeneID" id="69744271"/>
<dbReference type="KEGG" id="gbe:GbCGDNIH1_0022"/>
<dbReference type="eggNOG" id="COG0443">
    <property type="taxonomic scope" value="Bacteria"/>
</dbReference>
<dbReference type="HOGENOM" id="CLU_005965_2_3_5"/>
<dbReference type="OrthoDB" id="9766019at2"/>
<dbReference type="Proteomes" id="UP000001963">
    <property type="component" value="Chromosome"/>
</dbReference>
<dbReference type="GO" id="GO:0005524">
    <property type="term" value="F:ATP binding"/>
    <property type="evidence" value="ECO:0007669"/>
    <property type="project" value="UniProtKB-UniRule"/>
</dbReference>
<dbReference type="GO" id="GO:0140662">
    <property type="term" value="F:ATP-dependent protein folding chaperone"/>
    <property type="evidence" value="ECO:0007669"/>
    <property type="project" value="InterPro"/>
</dbReference>
<dbReference type="GO" id="GO:0051082">
    <property type="term" value="F:unfolded protein binding"/>
    <property type="evidence" value="ECO:0007669"/>
    <property type="project" value="InterPro"/>
</dbReference>
<dbReference type="CDD" id="cd11733">
    <property type="entry name" value="ASKHA_NBD_HSP70_HSPA9"/>
    <property type="match status" value="1"/>
</dbReference>
<dbReference type="FunFam" id="2.60.34.10:FF:000014">
    <property type="entry name" value="Chaperone protein DnaK HSP70"/>
    <property type="match status" value="1"/>
</dbReference>
<dbReference type="FunFam" id="3.30.420.40:FF:000020">
    <property type="entry name" value="Chaperone protein HscA homolog"/>
    <property type="match status" value="1"/>
</dbReference>
<dbReference type="FunFam" id="1.20.1270.10:FF:000001">
    <property type="entry name" value="Molecular chaperone DnaK"/>
    <property type="match status" value="1"/>
</dbReference>
<dbReference type="FunFam" id="3.30.420.40:FF:000004">
    <property type="entry name" value="Molecular chaperone DnaK"/>
    <property type="match status" value="1"/>
</dbReference>
<dbReference type="FunFam" id="3.90.640.10:FF:000003">
    <property type="entry name" value="Molecular chaperone DnaK"/>
    <property type="match status" value="1"/>
</dbReference>
<dbReference type="Gene3D" id="1.20.1270.10">
    <property type="match status" value="1"/>
</dbReference>
<dbReference type="Gene3D" id="3.30.420.40">
    <property type="match status" value="2"/>
</dbReference>
<dbReference type="Gene3D" id="3.90.640.10">
    <property type="entry name" value="Actin, Chain A, domain 4"/>
    <property type="match status" value="1"/>
</dbReference>
<dbReference type="Gene3D" id="2.60.34.10">
    <property type="entry name" value="Substrate Binding Domain Of DNAk, Chain A, domain 1"/>
    <property type="match status" value="1"/>
</dbReference>
<dbReference type="HAMAP" id="MF_00332">
    <property type="entry name" value="DnaK"/>
    <property type="match status" value="1"/>
</dbReference>
<dbReference type="InterPro" id="IPR043129">
    <property type="entry name" value="ATPase_NBD"/>
</dbReference>
<dbReference type="InterPro" id="IPR012725">
    <property type="entry name" value="Chaperone_DnaK"/>
</dbReference>
<dbReference type="InterPro" id="IPR018181">
    <property type="entry name" value="Heat_shock_70_CS"/>
</dbReference>
<dbReference type="InterPro" id="IPR029048">
    <property type="entry name" value="HSP70_C_sf"/>
</dbReference>
<dbReference type="InterPro" id="IPR029047">
    <property type="entry name" value="HSP70_peptide-bd_sf"/>
</dbReference>
<dbReference type="InterPro" id="IPR013126">
    <property type="entry name" value="Hsp_70_fam"/>
</dbReference>
<dbReference type="NCBIfam" id="NF001413">
    <property type="entry name" value="PRK00290.1"/>
    <property type="match status" value="1"/>
</dbReference>
<dbReference type="NCBIfam" id="NF003520">
    <property type="entry name" value="PRK05183.1"/>
    <property type="match status" value="1"/>
</dbReference>
<dbReference type="NCBIfam" id="TIGR02350">
    <property type="entry name" value="prok_dnaK"/>
    <property type="match status" value="1"/>
</dbReference>
<dbReference type="PANTHER" id="PTHR19375">
    <property type="entry name" value="HEAT SHOCK PROTEIN 70KDA"/>
    <property type="match status" value="1"/>
</dbReference>
<dbReference type="Pfam" id="PF00012">
    <property type="entry name" value="HSP70"/>
    <property type="match status" value="1"/>
</dbReference>
<dbReference type="PRINTS" id="PR00301">
    <property type="entry name" value="HEATSHOCK70"/>
</dbReference>
<dbReference type="SUPFAM" id="SSF53067">
    <property type="entry name" value="Actin-like ATPase domain"/>
    <property type="match status" value="2"/>
</dbReference>
<dbReference type="SUPFAM" id="SSF100934">
    <property type="entry name" value="Heat shock protein 70kD (HSP70), C-terminal subdomain"/>
    <property type="match status" value="1"/>
</dbReference>
<dbReference type="SUPFAM" id="SSF100920">
    <property type="entry name" value="Heat shock protein 70kD (HSP70), peptide-binding domain"/>
    <property type="match status" value="1"/>
</dbReference>
<dbReference type="PROSITE" id="PS00297">
    <property type="entry name" value="HSP70_1"/>
    <property type="match status" value="1"/>
</dbReference>
<dbReference type="PROSITE" id="PS00329">
    <property type="entry name" value="HSP70_2"/>
    <property type="match status" value="1"/>
</dbReference>
<dbReference type="PROSITE" id="PS01036">
    <property type="entry name" value="HSP70_3"/>
    <property type="match status" value="1"/>
</dbReference>
<accession>Q0BW82</accession>